<organism>
    <name type="scientific">Oryza sativa subsp. japonica</name>
    <name type="common">Rice</name>
    <dbReference type="NCBI Taxonomy" id="39947"/>
    <lineage>
        <taxon>Eukaryota</taxon>
        <taxon>Viridiplantae</taxon>
        <taxon>Streptophyta</taxon>
        <taxon>Embryophyta</taxon>
        <taxon>Tracheophyta</taxon>
        <taxon>Spermatophyta</taxon>
        <taxon>Magnoliopsida</taxon>
        <taxon>Liliopsida</taxon>
        <taxon>Poales</taxon>
        <taxon>Poaceae</taxon>
        <taxon>BOP clade</taxon>
        <taxon>Oryzoideae</taxon>
        <taxon>Oryzeae</taxon>
        <taxon>Oryzinae</taxon>
        <taxon>Oryza</taxon>
        <taxon>Oryza sativa</taxon>
    </lineage>
</organism>
<protein>
    <recommendedName>
        <fullName evidence="12">Glutamine synthetase, chloroplastic</fullName>
        <ecNumber evidence="1">6.3.1.2</ecNumber>
    </recommendedName>
    <alternativeName>
        <fullName evidence="12">Glutamate--ammonia ligase GLN2</fullName>
        <shortName evidence="12">OsGLN2</shortName>
    </alternativeName>
    <alternativeName>
        <fullName evidence="12">OsGS2</fullName>
        <shortName evidence="9">GS2</shortName>
    </alternativeName>
</protein>
<comment type="function">
    <text evidence="7">Light-modulated chloroplastic glutamine synthetase, encoded by a nuclear gene and expressed primarily in leaves, and which is responsible for the reassimilation of the ammonia generated by photorespiration.</text>
</comment>
<comment type="catalytic activity">
    <reaction evidence="1">
        <text>L-glutamate + NH4(+) + ATP = L-glutamine + ADP + phosphate + H(+)</text>
        <dbReference type="Rhea" id="RHEA:16169"/>
        <dbReference type="ChEBI" id="CHEBI:15378"/>
        <dbReference type="ChEBI" id="CHEBI:28938"/>
        <dbReference type="ChEBI" id="CHEBI:29985"/>
        <dbReference type="ChEBI" id="CHEBI:30616"/>
        <dbReference type="ChEBI" id="CHEBI:43474"/>
        <dbReference type="ChEBI" id="CHEBI:58359"/>
        <dbReference type="ChEBI" id="CHEBI:456216"/>
        <dbReference type="EC" id="6.3.1.2"/>
    </reaction>
    <physiologicalReaction direction="left-to-right" evidence="1">
        <dbReference type="Rhea" id="RHEA:16170"/>
    </physiologicalReaction>
</comment>
<comment type="subunit">
    <text evidence="2">Homooctamer.</text>
</comment>
<comment type="subcellular location">
    <subcellularLocation>
        <location evidence="3">Plastid</location>
        <location evidence="3">Chloroplast</location>
    </subcellularLocation>
</comment>
<comment type="alternative products">
    <event type="alternative splicing"/>
    <isoform>
        <id>P14655-1</id>
        <name>1</name>
        <sequence type="displayed"/>
    </isoform>
    <isoform>
        <id>P14655-2</id>
        <name>2</name>
        <sequence type="described" ref="VSP_018231 VSP_018232"/>
    </isoform>
</comment>
<comment type="miscellaneous">
    <text evidence="7">Plants overexpressing GLN2 show enhanced photorespiration capacity.</text>
</comment>
<comment type="similarity">
    <text evidence="12">Belongs to the glutamine synthetase family.</text>
</comment>
<comment type="sequence caution" evidence="12">
    <conflict type="erroneous gene model prediction">
        <sequence resource="EMBL-CDS" id="AAL87183"/>
    </conflict>
</comment>
<reference key="1">
    <citation type="journal article" date="1989" name="Plant Mol. Biol.">
        <title>Three cDNA sequences coding for glutamine synthetase polypeptides in Oryza sativa L.</title>
        <authorList>
            <person name="Sakamoto A."/>
            <person name="Ogawa M."/>
            <person name="Masumura T."/>
            <person name="Shibata D."/>
            <person name="Takeba G."/>
            <person name="Tanaka K."/>
            <person name="Fujii S."/>
        </authorList>
    </citation>
    <scope>NUCLEOTIDE SEQUENCE [MRNA] (ISOFORM 1)</scope>
    <source>
        <strain>cv. Kinmaze</strain>
        <tissue>Shoot</tissue>
    </source>
</reference>
<reference key="2">
    <citation type="journal article" date="2004" name="Mol. Cells">
        <title>Further evidence of microcolinearity between barley and rice genomes at two orthologous regions.</title>
        <authorList>
            <person name="Park Y.-J."/>
            <person name="Dixit A."/>
            <person name="Yoo J.-W."/>
            <person name="Bennetzen J."/>
        </authorList>
    </citation>
    <scope>NUCLEOTIDE SEQUENCE [GENOMIC DNA]</scope>
    <source>
        <strain>cv. Nipponbare</strain>
    </source>
</reference>
<reference key="3">
    <citation type="journal article" date="2002" name="Nature">
        <title>Sequence and analysis of rice chromosome 4.</title>
        <authorList>
            <person name="Feng Q."/>
            <person name="Zhang Y."/>
            <person name="Hao P."/>
            <person name="Wang S."/>
            <person name="Fu G."/>
            <person name="Huang Y."/>
            <person name="Li Y."/>
            <person name="Zhu J."/>
            <person name="Liu Y."/>
            <person name="Hu X."/>
            <person name="Jia P."/>
            <person name="Zhang Y."/>
            <person name="Zhao Q."/>
            <person name="Ying K."/>
            <person name="Yu S."/>
            <person name="Tang Y."/>
            <person name="Weng Q."/>
            <person name="Zhang L."/>
            <person name="Lu Y."/>
            <person name="Mu J."/>
            <person name="Lu Y."/>
            <person name="Zhang L.S."/>
            <person name="Yu Z."/>
            <person name="Fan D."/>
            <person name="Liu X."/>
            <person name="Lu T."/>
            <person name="Li C."/>
            <person name="Wu Y."/>
            <person name="Sun T."/>
            <person name="Lei H."/>
            <person name="Li T."/>
            <person name="Hu H."/>
            <person name="Guan J."/>
            <person name="Wu M."/>
            <person name="Zhang R."/>
            <person name="Zhou B."/>
            <person name="Chen Z."/>
            <person name="Chen L."/>
            <person name="Jin Z."/>
            <person name="Wang R."/>
            <person name="Yin H."/>
            <person name="Cai Z."/>
            <person name="Ren S."/>
            <person name="Lv G."/>
            <person name="Gu W."/>
            <person name="Zhu G."/>
            <person name="Tu Y."/>
            <person name="Jia J."/>
            <person name="Zhang Y."/>
            <person name="Chen J."/>
            <person name="Kang H."/>
            <person name="Chen X."/>
            <person name="Shao C."/>
            <person name="Sun Y."/>
            <person name="Hu Q."/>
            <person name="Zhang X."/>
            <person name="Zhang W."/>
            <person name="Wang L."/>
            <person name="Ding C."/>
            <person name="Sheng H."/>
            <person name="Gu J."/>
            <person name="Chen S."/>
            <person name="Ni L."/>
            <person name="Zhu F."/>
            <person name="Chen W."/>
            <person name="Lan L."/>
            <person name="Lai Y."/>
            <person name="Cheng Z."/>
            <person name="Gu M."/>
            <person name="Jiang J."/>
            <person name="Li J."/>
            <person name="Hong G."/>
            <person name="Xue Y."/>
            <person name="Han B."/>
        </authorList>
    </citation>
    <scope>NUCLEOTIDE SEQUENCE [LARGE SCALE GENOMIC DNA]</scope>
    <source>
        <strain>cv. Nipponbare</strain>
    </source>
</reference>
<reference key="4">
    <citation type="journal article" date="2005" name="Nature">
        <title>The map-based sequence of the rice genome.</title>
        <authorList>
            <consortium name="International rice genome sequencing project (IRGSP)"/>
        </authorList>
    </citation>
    <scope>NUCLEOTIDE SEQUENCE [LARGE SCALE GENOMIC DNA]</scope>
    <source>
        <strain>cv. Nipponbare</strain>
    </source>
</reference>
<reference key="5">
    <citation type="journal article" date="2008" name="Nucleic Acids Res.">
        <title>The rice annotation project database (RAP-DB): 2008 update.</title>
        <authorList>
            <consortium name="The rice annotation project (RAP)"/>
        </authorList>
    </citation>
    <scope>GENOME REANNOTATION</scope>
    <source>
        <strain>cv. Nipponbare</strain>
    </source>
</reference>
<reference key="6">
    <citation type="journal article" date="2013" name="Rice">
        <title>Improvement of the Oryza sativa Nipponbare reference genome using next generation sequence and optical map data.</title>
        <authorList>
            <person name="Kawahara Y."/>
            <person name="de la Bastide M."/>
            <person name="Hamilton J.P."/>
            <person name="Kanamori H."/>
            <person name="McCombie W.R."/>
            <person name="Ouyang S."/>
            <person name="Schwartz D.C."/>
            <person name="Tanaka T."/>
            <person name="Wu J."/>
            <person name="Zhou S."/>
            <person name="Childs K.L."/>
            <person name="Davidson R.M."/>
            <person name="Lin H."/>
            <person name="Quesada-Ocampo L."/>
            <person name="Vaillancourt B."/>
            <person name="Sakai H."/>
            <person name="Lee S.S."/>
            <person name="Kim J."/>
            <person name="Numa H."/>
            <person name="Itoh T."/>
            <person name="Buell C.R."/>
            <person name="Matsumoto T."/>
        </authorList>
    </citation>
    <scope>GENOME REANNOTATION</scope>
    <source>
        <strain>cv. Nipponbare</strain>
    </source>
</reference>
<reference key="7">
    <citation type="journal article" date="2005" name="PLoS Biol.">
        <title>The genomes of Oryza sativa: a history of duplications.</title>
        <authorList>
            <person name="Yu J."/>
            <person name="Wang J."/>
            <person name="Lin W."/>
            <person name="Li S."/>
            <person name="Li H."/>
            <person name="Zhou J."/>
            <person name="Ni P."/>
            <person name="Dong W."/>
            <person name="Hu S."/>
            <person name="Zeng C."/>
            <person name="Zhang J."/>
            <person name="Zhang Y."/>
            <person name="Li R."/>
            <person name="Xu Z."/>
            <person name="Li S."/>
            <person name="Li X."/>
            <person name="Zheng H."/>
            <person name="Cong L."/>
            <person name="Lin L."/>
            <person name="Yin J."/>
            <person name="Geng J."/>
            <person name="Li G."/>
            <person name="Shi J."/>
            <person name="Liu J."/>
            <person name="Lv H."/>
            <person name="Li J."/>
            <person name="Wang J."/>
            <person name="Deng Y."/>
            <person name="Ran L."/>
            <person name="Shi X."/>
            <person name="Wang X."/>
            <person name="Wu Q."/>
            <person name="Li C."/>
            <person name="Ren X."/>
            <person name="Wang J."/>
            <person name="Wang X."/>
            <person name="Li D."/>
            <person name="Liu D."/>
            <person name="Zhang X."/>
            <person name="Ji Z."/>
            <person name="Zhao W."/>
            <person name="Sun Y."/>
            <person name="Zhang Z."/>
            <person name="Bao J."/>
            <person name="Han Y."/>
            <person name="Dong L."/>
            <person name="Ji J."/>
            <person name="Chen P."/>
            <person name="Wu S."/>
            <person name="Liu J."/>
            <person name="Xiao Y."/>
            <person name="Bu D."/>
            <person name="Tan J."/>
            <person name="Yang L."/>
            <person name="Ye C."/>
            <person name="Zhang J."/>
            <person name="Xu J."/>
            <person name="Zhou Y."/>
            <person name="Yu Y."/>
            <person name="Zhang B."/>
            <person name="Zhuang S."/>
            <person name="Wei H."/>
            <person name="Liu B."/>
            <person name="Lei M."/>
            <person name="Yu H."/>
            <person name="Li Y."/>
            <person name="Xu H."/>
            <person name="Wei S."/>
            <person name="He X."/>
            <person name="Fang L."/>
            <person name="Zhang Z."/>
            <person name="Zhang Y."/>
            <person name="Huang X."/>
            <person name="Su Z."/>
            <person name="Tong W."/>
            <person name="Li J."/>
            <person name="Tong Z."/>
            <person name="Li S."/>
            <person name="Ye J."/>
            <person name="Wang L."/>
            <person name="Fang L."/>
            <person name="Lei T."/>
            <person name="Chen C.-S."/>
            <person name="Chen H.-C."/>
            <person name="Xu Z."/>
            <person name="Li H."/>
            <person name="Huang H."/>
            <person name="Zhang F."/>
            <person name="Xu H."/>
            <person name="Li N."/>
            <person name="Zhao C."/>
            <person name="Li S."/>
            <person name="Dong L."/>
            <person name="Huang Y."/>
            <person name="Li L."/>
            <person name="Xi Y."/>
            <person name="Qi Q."/>
            <person name="Li W."/>
            <person name="Zhang B."/>
            <person name="Hu W."/>
            <person name="Zhang Y."/>
            <person name="Tian X."/>
            <person name="Jiao Y."/>
            <person name="Liang X."/>
            <person name="Jin J."/>
            <person name="Gao L."/>
            <person name="Zheng W."/>
            <person name="Hao B."/>
            <person name="Liu S.-M."/>
            <person name="Wang W."/>
            <person name="Yuan L."/>
            <person name="Cao M."/>
            <person name="McDermott J."/>
            <person name="Samudrala R."/>
            <person name="Wang J."/>
            <person name="Wong G.K.-S."/>
            <person name="Yang H."/>
        </authorList>
    </citation>
    <scope>NUCLEOTIDE SEQUENCE [LARGE SCALE GENOMIC DNA]</scope>
    <source>
        <strain>cv. Nipponbare</strain>
    </source>
</reference>
<reference key="8">
    <citation type="journal article" date="2003" name="Science">
        <title>Collection, mapping, and annotation of over 28,000 cDNA clones from japonica rice.</title>
        <authorList>
            <consortium name="The rice full-length cDNA consortium"/>
        </authorList>
    </citation>
    <scope>NUCLEOTIDE SEQUENCE [LARGE SCALE MRNA] (ISOFORM 2)</scope>
    <source>
        <strain>cv. Nipponbare</strain>
    </source>
</reference>
<reference key="9">
    <citation type="journal article" date="2004" name="Nucleic Acids Res.">
        <title>Rice proteome database based on two-dimensional polyacrylamide gel electrophoresis: its status in 2003.</title>
        <authorList>
            <person name="Komatsu S."/>
            <person name="Kojima K."/>
            <person name="Suzuki K."/>
            <person name="Ozaki K."/>
            <person name="Higo K."/>
        </authorList>
    </citation>
    <scope>PROTEIN SEQUENCE OF 49-58</scope>
    <source>
        <strain>cv. Nipponbare</strain>
        <tissue>Leaf</tissue>
    </source>
</reference>
<reference key="10">
    <citation type="journal article" date="2000" name="Plant Mol. Biol.">
        <title>Enhanced tolerance to salt stress in transgenic rice that overexpresses chloroplast glutamine synthetase.</title>
        <authorList>
            <person name="Hoshida H."/>
            <person name="Tanaka Y."/>
            <person name="Hibino T."/>
            <person name="Hayashi Y."/>
            <person name="Tanaka A."/>
            <person name="Takabe T."/>
            <person name="Takabe T."/>
        </authorList>
    </citation>
    <scope>FUNCTION</scope>
</reference>
<evidence type="ECO:0000250" key="1">
    <source>
        <dbReference type="UniProtKB" id="P14656"/>
    </source>
</evidence>
<evidence type="ECO:0000250" key="2">
    <source>
        <dbReference type="UniProtKB" id="Q02154"/>
    </source>
</evidence>
<evidence type="ECO:0000255" key="3"/>
<evidence type="ECO:0000255" key="4">
    <source>
        <dbReference type="PROSITE-ProRule" id="PRU01330"/>
    </source>
</evidence>
<evidence type="ECO:0000255" key="5">
    <source>
        <dbReference type="PROSITE-ProRule" id="PRU01331"/>
    </source>
</evidence>
<evidence type="ECO:0000256" key="6">
    <source>
        <dbReference type="SAM" id="MobiDB-lite"/>
    </source>
</evidence>
<evidence type="ECO:0000269" key="7">
    <source>
    </source>
</evidence>
<evidence type="ECO:0000269" key="8">
    <source>
    </source>
</evidence>
<evidence type="ECO:0000303" key="9">
    <source>
    </source>
</evidence>
<evidence type="ECO:0000303" key="10">
    <source>
    </source>
</evidence>
<evidence type="ECO:0000303" key="11">
    <source>
    </source>
</evidence>
<evidence type="ECO:0000305" key="12"/>
<evidence type="ECO:0000312" key="13">
    <source>
        <dbReference type="EMBL" id="BAF16047.1"/>
    </source>
</evidence>
<evidence type="ECO:0000312" key="14">
    <source>
        <dbReference type="EMBL" id="CAE02885.2"/>
    </source>
</evidence>
<evidence type="ECO:0000312" key="15">
    <source>
        <dbReference type="EMBL" id="CAE54574.1"/>
    </source>
</evidence>
<evidence type="ECO:0000312" key="16">
    <source>
        <dbReference type="EMBL" id="EEE61834.1"/>
    </source>
</evidence>
<accession>P14655</accession>
<accession>A0A0P0WG45</accession>
<accession>Q0J9E0</accession>
<accession>Q7XR09</accession>
<accession>Q8S3P5</accession>
<proteinExistence type="evidence at protein level"/>
<gene>
    <name evidence="12" type="primary">GLN2</name>
    <name evidence="11" type="synonym">RGS31</name>
    <name evidence="13" type="ordered locus">Os04g0659100</name>
    <name evidence="12" type="ordered locus">LOC_Os04g56400</name>
    <name evidence="16" type="ORF">OsJ_16481</name>
    <name evidence="15" type="ORF">OSJNBa0011F23.15</name>
    <name evidence="14" type="ORF">OSJNBa0015K02.2</name>
</gene>
<dbReference type="EC" id="6.3.1.2" evidence="1"/>
<dbReference type="EMBL" id="X14246">
    <property type="protein sequence ID" value="CAA32462.1"/>
    <property type="molecule type" value="mRNA"/>
</dbReference>
<dbReference type="EMBL" id="AF480497">
    <property type="protein sequence ID" value="AAL87183.1"/>
    <property type="status" value="ALT_SEQ"/>
    <property type="molecule type" value="Genomic_DNA"/>
</dbReference>
<dbReference type="EMBL" id="AL606608">
    <property type="protein sequence ID" value="CAE02885.2"/>
    <property type="molecule type" value="Genomic_DNA"/>
</dbReference>
<dbReference type="EMBL" id="AL662953">
    <property type="protein sequence ID" value="CAE54574.1"/>
    <property type="molecule type" value="Genomic_DNA"/>
</dbReference>
<dbReference type="EMBL" id="AP008210">
    <property type="protein sequence ID" value="BAF16047.1"/>
    <property type="molecule type" value="Genomic_DNA"/>
</dbReference>
<dbReference type="EMBL" id="AP014960">
    <property type="protein sequence ID" value="BAS91430.1"/>
    <property type="molecule type" value="Genomic_DNA"/>
</dbReference>
<dbReference type="EMBL" id="AP014960">
    <property type="protein sequence ID" value="BAS91431.1"/>
    <property type="molecule type" value="Genomic_DNA"/>
</dbReference>
<dbReference type="EMBL" id="CM000141">
    <property type="protein sequence ID" value="EEE61834.1"/>
    <property type="molecule type" value="Genomic_DNA"/>
</dbReference>
<dbReference type="EMBL" id="AK063706">
    <property type="status" value="NOT_ANNOTATED_CDS"/>
    <property type="molecule type" value="mRNA"/>
</dbReference>
<dbReference type="PIR" id="S07471">
    <property type="entry name" value="AJRZQD"/>
</dbReference>
<dbReference type="RefSeq" id="XP_015635322.1">
    <property type="nucleotide sequence ID" value="XM_015779836.1"/>
</dbReference>
<dbReference type="RefSeq" id="XP_015635323.1">
    <property type="nucleotide sequence ID" value="XM_015779837.1"/>
</dbReference>
<dbReference type="SMR" id="P14655"/>
<dbReference type="FunCoup" id="P14655">
    <property type="interactions" value="2680"/>
</dbReference>
<dbReference type="STRING" id="39947.P14655"/>
<dbReference type="PaxDb" id="39947-P14655"/>
<dbReference type="EnsemblPlants" id="Os04t0659100-01">
    <molecule id="P14655-1"/>
    <property type="protein sequence ID" value="Os04t0659100-01"/>
    <property type="gene ID" value="Os04g0659100"/>
</dbReference>
<dbReference type="EnsemblPlants" id="Os04t0659100-03">
    <molecule id="P14655-1"/>
    <property type="protein sequence ID" value="Os04t0659100-03"/>
    <property type="gene ID" value="Os04g0659100"/>
</dbReference>
<dbReference type="Gramene" id="Os04t0659100-01">
    <molecule id="P14655-1"/>
    <property type="protein sequence ID" value="Os04t0659100-01"/>
    <property type="gene ID" value="Os04g0659100"/>
</dbReference>
<dbReference type="Gramene" id="Os04t0659100-03">
    <molecule id="P14655-1"/>
    <property type="protein sequence ID" value="Os04t0659100-03"/>
    <property type="gene ID" value="Os04g0659100"/>
</dbReference>
<dbReference type="KEGG" id="dosa:Os04g0659100"/>
<dbReference type="eggNOG" id="KOG0683">
    <property type="taxonomic scope" value="Eukaryota"/>
</dbReference>
<dbReference type="HOGENOM" id="CLU_036762_4_0_1"/>
<dbReference type="InParanoid" id="P14655"/>
<dbReference type="OMA" id="DRRPNAN"/>
<dbReference type="OrthoDB" id="1936100at2759"/>
<dbReference type="BRENDA" id="6.3.1.2">
    <property type="organism ID" value="4460"/>
</dbReference>
<dbReference type="PlantReactome" id="R-OSA-1119293">
    <property type="pathway name" value="Glutamine biosynthesis I"/>
</dbReference>
<dbReference type="PlantReactome" id="R-OSA-1119443">
    <property type="pathway name" value="Ammonia assimilation cycle"/>
</dbReference>
<dbReference type="Proteomes" id="UP000000763">
    <property type="component" value="Chromosome 4"/>
</dbReference>
<dbReference type="Proteomes" id="UP000007752">
    <property type="component" value="Chromosome 4"/>
</dbReference>
<dbReference type="Proteomes" id="UP000059680">
    <property type="component" value="Chromosome 4"/>
</dbReference>
<dbReference type="ExpressionAtlas" id="P14655">
    <property type="expression patterns" value="baseline and differential"/>
</dbReference>
<dbReference type="GO" id="GO:0009507">
    <property type="term" value="C:chloroplast"/>
    <property type="evidence" value="ECO:0007669"/>
    <property type="project" value="UniProtKB-SubCell"/>
</dbReference>
<dbReference type="GO" id="GO:0005737">
    <property type="term" value="C:cytoplasm"/>
    <property type="evidence" value="ECO:0000318"/>
    <property type="project" value="GO_Central"/>
</dbReference>
<dbReference type="GO" id="GO:0005739">
    <property type="term" value="C:mitochondrion"/>
    <property type="evidence" value="ECO:0007669"/>
    <property type="project" value="EnsemblPlants"/>
</dbReference>
<dbReference type="GO" id="GO:0005524">
    <property type="term" value="F:ATP binding"/>
    <property type="evidence" value="ECO:0007669"/>
    <property type="project" value="UniProtKB-KW"/>
</dbReference>
<dbReference type="GO" id="GO:0004356">
    <property type="term" value="F:glutamine synthetase activity"/>
    <property type="evidence" value="ECO:0000318"/>
    <property type="project" value="GO_Central"/>
</dbReference>
<dbReference type="GO" id="GO:0003729">
    <property type="term" value="F:mRNA binding"/>
    <property type="evidence" value="ECO:0007669"/>
    <property type="project" value="EnsemblPlants"/>
</dbReference>
<dbReference type="GO" id="GO:0006542">
    <property type="term" value="P:glutamine biosynthetic process"/>
    <property type="evidence" value="ECO:0000318"/>
    <property type="project" value="GO_Central"/>
</dbReference>
<dbReference type="GO" id="GO:0046686">
    <property type="term" value="P:response to cadmium ion"/>
    <property type="evidence" value="ECO:0007669"/>
    <property type="project" value="EnsemblPlants"/>
</dbReference>
<dbReference type="FunFam" id="3.30.590.10:FF:000004">
    <property type="entry name" value="Glutamine synthetase"/>
    <property type="match status" value="1"/>
</dbReference>
<dbReference type="FunFam" id="3.10.20.70:FF:000003">
    <property type="entry name" value="Glutamine synthetase, chloroplastic"/>
    <property type="match status" value="1"/>
</dbReference>
<dbReference type="Gene3D" id="3.10.20.70">
    <property type="entry name" value="Glutamine synthetase, N-terminal domain"/>
    <property type="match status" value="1"/>
</dbReference>
<dbReference type="Gene3D" id="3.30.590.10">
    <property type="entry name" value="Glutamine synthetase/guanido kinase, catalytic domain"/>
    <property type="match status" value="1"/>
</dbReference>
<dbReference type="InterPro" id="IPR008147">
    <property type="entry name" value="Gln_synt_N"/>
</dbReference>
<dbReference type="InterPro" id="IPR036651">
    <property type="entry name" value="Gln_synt_N_sf"/>
</dbReference>
<dbReference type="InterPro" id="IPR014746">
    <property type="entry name" value="Gln_synth/guanido_kin_cat_dom"/>
</dbReference>
<dbReference type="InterPro" id="IPR008146">
    <property type="entry name" value="Gln_synth_cat_dom"/>
</dbReference>
<dbReference type="InterPro" id="IPR027303">
    <property type="entry name" value="Gln_synth_gly_rich_site"/>
</dbReference>
<dbReference type="InterPro" id="IPR027302">
    <property type="entry name" value="Gln_synth_N_conserv_site"/>
</dbReference>
<dbReference type="InterPro" id="IPR050292">
    <property type="entry name" value="Glutamine_Synthetase"/>
</dbReference>
<dbReference type="PANTHER" id="PTHR20852">
    <property type="entry name" value="GLUTAMINE SYNTHETASE"/>
    <property type="match status" value="1"/>
</dbReference>
<dbReference type="PANTHER" id="PTHR20852:SF118">
    <property type="entry name" value="GLUTAMINE SYNTHETASE, CHLOROPLASTIC_MITOCHONDRIAL"/>
    <property type="match status" value="1"/>
</dbReference>
<dbReference type="Pfam" id="PF00120">
    <property type="entry name" value="Gln-synt_C"/>
    <property type="match status" value="1"/>
</dbReference>
<dbReference type="Pfam" id="PF03951">
    <property type="entry name" value="Gln-synt_N"/>
    <property type="match status" value="1"/>
</dbReference>
<dbReference type="SMART" id="SM01230">
    <property type="entry name" value="Gln-synt_C"/>
    <property type="match status" value="1"/>
</dbReference>
<dbReference type="SUPFAM" id="SSF54368">
    <property type="entry name" value="Glutamine synthetase, N-terminal domain"/>
    <property type="match status" value="1"/>
</dbReference>
<dbReference type="SUPFAM" id="SSF55931">
    <property type="entry name" value="Glutamine synthetase/guanido kinase"/>
    <property type="match status" value="1"/>
</dbReference>
<dbReference type="PROSITE" id="PS00180">
    <property type="entry name" value="GLNA_1"/>
    <property type="match status" value="1"/>
</dbReference>
<dbReference type="PROSITE" id="PS00181">
    <property type="entry name" value="GLNA_ATP"/>
    <property type="match status" value="1"/>
</dbReference>
<dbReference type="PROSITE" id="PS51986">
    <property type="entry name" value="GS_BETA_GRASP"/>
    <property type="match status" value="1"/>
</dbReference>
<dbReference type="PROSITE" id="PS51987">
    <property type="entry name" value="GS_CATALYTIC"/>
    <property type="match status" value="1"/>
</dbReference>
<keyword id="KW-0025">Alternative splicing</keyword>
<keyword id="KW-0067">ATP-binding</keyword>
<keyword id="KW-0150">Chloroplast</keyword>
<keyword id="KW-0903">Direct protein sequencing</keyword>
<keyword id="KW-0436">Ligase</keyword>
<keyword id="KW-0547">Nucleotide-binding</keyword>
<keyword id="KW-0934">Plastid</keyword>
<keyword id="KW-1185">Reference proteome</keyword>
<keyword id="KW-0809">Transit peptide</keyword>
<sequence>MAQAVVPAMQCQVGAVRARPAAAAAAAGGRVWGVRRTGRGTSGFRVMAVSTETTGVVTRMEQLLNMDTTPFTDKIIAEYIWVGGTGIDLRSKSRTISKPVEDPSELPKWNYDGSSTGQAPGEDSEVILYPQAIFKDPFRGGNNILVMCDTYTPAGEPIPTNKRNRAAQVFSDPKVVSQVPWFGIEQEYTLLQRDVNWPLGWPVGGYPGPQGPYYCAVGSDKSFGRDISDAHYKACLYAGINISGTNGEVMPGQWEYQVGPSVGIEAGDHIWISRYILERITEQAGVVLTLDPKPIQGDWNGAGCHTNYSTKSMREDGGFEVIKKAILNLSLRHDLHISAYGEGNERRLTGLHETASIDNFSWGVANRGCSIRVGRDTEAKGKGYLEDRRPASNMDPYVVTALLAETTILWEPTLEAEVLAAKKLALKV</sequence>
<name>GLNA2_ORYSJ</name>
<feature type="transit peptide" description="Chloroplast" evidence="8">
    <location>
        <begin position="1"/>
        <end position="48"/>
    </location>
</feature>
<feature type="chain" id="PRO_0000011181" description="Glutamine synthetase, chloroplastic">
    <location>
        <begin position="49"/>
        <end position="428"/>
    </location>
</feature>
<feature type="domain" description="GS beta-grasp" evidence="4">
    <location>
        <begin position="75"/>
        <end position="155"/>
    </location>
</feature>
<feature type="domain" description="GS catalytic" evidence="5">
    <location>
        <begin position="159"/>
        <end position="428"/>
    </location>
</feature>
<feature type="region of interest" description="Disordered" evidence="6">
    <location>
        <begin position="95"/>
        <end position="120"/>
    </location>
</feature>
<feature type="splice variant" id="VSP_018231" description="In isoform 2." evidence="10">
    <original>STKSMREDGGFEVI</original>
    <variation>RFHYLLLMLKYPAA</variation>
    <location>
        <begin position="309"/>
        <end position="322"/>
    </location>
</feature>
<feature type="splice variant" id="VSP_018232" description="In isoform 2." evidence="10">
    <location>
        <begin position="323"/>
        <end position="428"/>
    </location>
</feature>